<organism>
    <name type="scientific">Saccharomyces cerevisiae (strain ATCC 204508 / S288c)</name>
    <name type="common">Baker's yeast</name>
    <dbReference type="NCBI Taxonomy" id="559292"/>
    <lineage>
        <taxon>Eukaryota</taxon>
        <taxon>Fungi</taxon>
        <taxon>Dikarya</taxon>
        <taxon>Ascomycota</taxon>
        <taxon>Saccharomycotina</taxon>
        <taxon>Saccharomycetes</taxon>
        <taxon>Saccharomycetales</taxon>
        <taxon>Saccharomycetaceae</taxon>
        <taxon>Saccharomyces</taxon>
    </lineage>
</organism>
<accession>P53728</accession>
<accession>D6W1K2</accession>
<accession>E9P900</accession>
<dbReference type="EC" id="5.2.1.8"/>
<dbReference type="EMBL" id="Z71643">
    <property type="protein sequence ID" value="CAA96308.1"/>
    <property type="molecule type" value="Genomic_DNA"/>
</dbReference>
<dbReference type="EMBL" id="AY692954">
    <property type="protein sequence ID" value="AAT92973.1"/>
    <property type="molecule type" value="Genomic_DNA"/>
</dbReference>
<dbReference type="EMBL" id="BK006947">
    <property type="protein sequence ID" value="DAA10568.1"/>
    <property type="molecule type" value="Genomic_DNA"/>
</dbReference>
<dbReference type="PIR" id="S63359">
    <property type="entry name" value="S63359"/>
</dbReference>
<dbReference type="RefSeq" id="NP_014425.3">
    <property type="nucleotide sequence ID" value="NM_001183205.3"/>
</dbReference>
<dbReference type="SMR" id="P53728"/>
<dbReference type="BioGRID" id="35852">
    <property type="interactions" value="114"/>
</dbReference>
<dbReference type="DIP" id="DIP-4261N"/>
<dbReference type="FunCoup" id="P53728">
    <property type="interactions" value="64"/>
</dbReference>
<dbReference type="IntAct" id="P53728">
    <property type="interactions" value="4"/>
</dbReference>
<dbReference type="MINT" id="P53728"/>
<dbReference type="STRING" id="4932.YNR028W"/>
<dbReference type="iPTMnet" id="P53728"/>
<dbReference type="PaxDb" id="4932-YNR028W"/>
<dbReference type="PeptideAtlas" id="P53728"/>
<dbReference type="EnsemblFungi" id="YNR028W_mRNA">
    <property type="protein sequence ID" value="YNR028W"/>
    <property type="gene ID" value="YNR028W"/>
</dbReference>
<dbReference type="GeneID" id="855762"/>
<dbReference type="KEGG" id="sce:YNR028W"/>
<dbReference type="AGR" id="SGD:S000005311"/>
<dbReference type="SGD" id="S000005311">
    <property type="gene designation" value="CPR8"/>
</dbReference>
<dbReference type="VEuPathDB" id="FungiDB:YNR028W"/>
<dbReference type="eggNOG" id="KOG0880">
    <property type="taxonomic scope" value="Eukaryota"/>
</dbReference>
<dbReference type="HOGENOM" id="CLU_012062_4_1_1"/>
<dbReference type="InParanoid" id="P53728"/>
<dbReference type="OMA" id="QPITIGY"/>
<dbReference type="OrthoDB" id="4051692at2759"/>
<dbReference type="BioCyc" id="YEAST:YNR028W-MONOMER"/>
<dbReference type="BioGRID-ORCS" id="855762">
    <property type="hits" value="0 hits in 10 CRISPR screens"/>
</dbReference>
<dbReference type="CD-CODE" id="E03F929F">
    <property type="entry name" value="Stress granule"/>
</dbReference>
<dbReference type="PRO" id="PR:P53728"/>
<dbReference type="Proteomes" id="UP000002311">
    <property type="component" value="Chromosome XIV"/>
</dbReference>
<dbReference type="RNAct" id="P53728">
    <property type="molecule type" value="protein"/>
</dbReference>
<dbReference type="GO" id="GO:0005737">
    <property type="term" value="C:cytoplasm"/>
    <property type="evidence" value="ECO:0000318"/>
    <property type="project" value="GO_Central"/>
</dbReference>
<dbReference type="GO" id="GO:0005783">
    <property type="term" value="C:endoplasmic reticulum"/>
    <property type="evidence" value="ECO:0000318"/>
    <property type="project" value="GO_Central"/>
</dbReference>
<dbReference type="GO" id="GO:0000324">
    <property type="term" value="C:fungal-type vacuole"/>
    <property type="evidence" value="ECO:0007005"/>
    <property type="project" value="SGD"/>
</dbReference>
<dbReference type="GO" id="GO:0016018">
    <property type="term" value="F:cyclosporin A binding"/>
    <property type="evidence" value="ECO:0000318"/>
    <property type="project" value="GO_Central"/>
</dbReference>
<dbReference type="GO" id="GO:0003755">
    <property type="term" value="F:peptidyl-prolyl cis-trans isomerase activity"/>
    <property type="evidence" value="ECO:0000250"/>
    <property type="project" value="SGD"/>
</dbReference>
<dbReference type="GO" id="GO:0006457">
    <property type="term" value="P:protein folding"/>
    <property type="evidence" value="ECO:0000318"/>
    <property type="project" value="GO_Central"/>
</dbReference>
<dbReference type="Gene3D" id="2.40.100.10">
    <property type="entry name" value="Cyclophilin-like"/>
    <property type="match status" value="1"/>
</dbReference>
<dbReference type="InterPro" id="IPR029000">
    <property type="entry name" value="Cyclophilin-like_dom_sf"/>
</dbReference>
<dbReference type="InterPro" id="IPR002130">
    <property type="entry name" value="Cyclophilin-type_PPIase_dom"/>
</dbReference>
<dbReference type="PANTHER" id="PTHR11071">
    <property type="entry name" value="PEPTIDYL-PROLYL CIS-TRANS ISOMERASE"/>
    <property type="match status" value="1"/>
</dbReference>
<dbReference type="PANTHER" id="PTHR11071:SF568">
    <property type="entry name" value="PEPTIDYL-PROLYL CIS-TRANS ISOMERASE CPR4-RELATED"/>
    <property type="match status" value="1"/>
</dbReference>
<dbReference type="Pfam" id="PF00160">
    <property type="entry name" value="Pro_isomerase"/>
    <property type="match status" value="1"/>
</dbReference>
<dbReference type="PRINTS" id="PR00153">
    <property type="entry name" value="CSAPPISMRASE"/>
</dbReference>
<dbReference type="SUPFAM" id="SSF50891">
    <property type="entry name" value="Cyclophilin-like"/>
    <property type="match status" value="1"/>
</dbReference>
<dbReference type="PROSITE" id="PS50072">
    <property type="entry name" value="CSA_PPIASE_2"/>
    <property type="match status" value="1"/>
</dbReference>
<feature type="chain" id="PRO_0000064175" description="Peptidyl-prolyl cis-trans isomerase CYP8">
    <location>
        <begin position="1"/>
        <end position="308"/>
    </location>
</feature>
<feature type="domain" description="PPIase cyclophilin-type" evidence="2">
    <location>
        <begin position="56"/>
        <end position="215"/>
    </location>
</feature>
<feature type="sequence conflict" description="In Ref. 3; AAT92973." evidence="3" ref="3">
    <original>L</original>
    <variation>P</variation>
    <location>
        <position position="8"/>
    </location>
</feature>
<reference key="1">
    <citation type="journal article" date="1997" name="Nature">
        <title>The nucleotide sequence of Saccharomyces cerevisiae chromosome XIV and its evolutionary implications.</title>
        <authorList>
            <person name="Philippsen P."/>
            <person name="Kleine K."/>
            <person name="Poehlmann R."/>
            <person name="Duesterhoeft A."/>
            <person name="Hamberg K."/>
            <person name="Hegemann J.H."/>
            <person name="Obermaier B."/>
            <person name="Urrestarazu L.A."/>
            <person name="Aert R."/>
            <person name="Albermann K."/>
            <person name="Altmann R."/>
            <person name="Andre B."/>
            <person name="Baladron V."/>
            <person name="Ballesta J.P.G."/>
            <person name="Becam A.-M."/>
            <person name="Beinhauer J.D."/>
            <person name="Boskovic J."/>
            <person name="Buitrago M.J."/>
            <person name="Bussereau F."/>
            <person name="Coster F."/>
            <person name="Crouzet M."/>
            <person name="D'Angelo M."/>
            <person name="Dal Pero F."/>
            <person name="De Antoni A."/>
            <person name="del Rey F."/>
            <person name="Doignon F."/>
            <person name="Domdey H."/>
            <person name="Dubois E."/>
            <person name="Fiedler T.A."/>
            <person name="Fleig U."/>
            <person name="Floeth M."/>
            <person name="Fritz C."/>
            <person name="Gaillardin C."/>
            <person name="Garcia-Cantalejo J.M."/>
            <person name="Glansdorff N."/>
            <person name="Goffeau A."/>
            <person name="Gueldener U."/>
            <person name="Herbert C.J."/>
            <person name="Heumann K."/>
            <person name="Heuss-Neitzel D."/>
            <person name="Hilbert H."/>
            <person name="Hinni K."/>
            <person name="Iraqui Houssaini I."/>
            <person name="Jacquet M."/>
            <person name="Jimenez A."/>
            <person name="Jonniaux J.-L."/>
            <person name="Karpfinger-Hartl L."/>
            <person name="Lanfranchi G."/>
            <person name="Lepingle A."/>
            <person name="Levesque H."/>
            <person name="Lyck R."/>
            <person name="Maftahi M."/>
            <person name="Mallet L."/>
            <person name="Maurer C.T.C."/>
            <person name="Messenguy F."/>
            <person name="Mewes H.-W."/>
            <person name="Moestl D."/>
            <person name="Nasr F."/>
            <person name="Nicaud J.-M."/>
            <person name="Niedenthal R.K."/>
            <person name="Pandolfo D."/>
            <person name="Pierard A."/>
            <person name="Piravandi E."/>
            <person name="Planta R.J."/>
            <person name="Pohl T.M."/>
            <person name="Purnelle B."/>
            <person name="Rebischung C."/>
            <person name="Remacha M.A."/>
            <person name="Revuelta J.L."/>
            <person name="Rinke M."/>
            <person name="Saiz J.E."/>
            <person name="Sartorello F."/>
            <person name="Scherens B."/>
            <person name="Sen-Gupta M."/>
            <person name="Soler-Mira A."/>
            <person name="Urbanus J.H.M."/>
            <person name="Valle G."/>
            <person name="Van Dyck L."/>
            <person name="Verhasselt P."/>
            <person name="Vierendeels F."/>
            <person name="Vissers S."/>
            <person name="Voet M."/>
            <person name="Volckaert G."/>
            <person name="Wach A."/>
            <person name="Wambutt R."/>
            <person name="Wedler H."/>
            <person name="Zollner A."/>
            <person name="Hani J."/>
        </authorList>
    </citation>
    <scope>NUCLEOTIDE SEQUENCE [LARGE SCALE GENOMIC DNA]</scope>
    <source>
        <strain>ATCC 204508 / S288c</strain>
    </source>
</reference>
<reference key="2">
    <citation type="journal article" date="2014" name="G3 (Bethesda)">
        <title>The reference genome sequence of Saccharomyces cerevisiae: Then and now.</title>
        <authorList>
            <person name="Engel S.R."/>
            <person name="Dietrich F.S."/>
            <person name="Fisk D.G."/>
            <person name="Binkley G."/>
            <person name="Balakrishnan R."/>
            <person name="Costanzo M.C."/>
            <person name="Dwight S.S."/>
            <person name="Hitz B.C."/>
            <person name="Karra K."/>
            <person name="Nash R.S."/>
            <person name="Weng S."/>
            <person name="Wong E.D."/>
            <person name="Lloyd P."/>
            <person name="Skrzypek M.S."/>
            <person name="Miyasato S.R."/>
            <person name="Simison M."/>
            <person name="Cherry J.M."/>
        </authorList>
    </citation>
    <scope>GENOME REANNOTATION</scope>
    <source>
        <strain>ATCC 204508 / S288c</strain>
    </source>
</reference>
<reference key="3">
    <citation type="journal article" date="2007" name="Genome Res.">
        <title>Approaching a complete repository of sequence-verified protein-encoding clones for Saccharomyces cerevisiae.</title>
        <authorList>
            <person name="Hu Y."/>
            <person name="Rolfs A."/>
            <person name="Bhullar B."/>
            <person name="Murthy T.V.S."/>
            <person name="Zhu C."/>
            <person name="Berger M.F."/>
            <person name="Camargo A.A."/>
            <person name="Kelley F."/>
            <person name="McCarron S."/>
            <person name="Jepson D."/>
            <person name="Richardson A."/>
            <person name="Raphael J."/>
            <person name="Moreira D."/>
            <person name="Taycher E."/>
            <person name="Zuo D."/>
            <person name="Mohr S."/>
            <person name="Kane M.F."/>
            <person name="Williamson J."/>
            <person name="Simpson A.J.G."/>
            <person name="Bulyk M.L."/>
            <person name="Harlow E."/>
            <person name="Marsischky G."/>
            <person name="Kolodner R.D."/>
            <person name="LaBaer J."/>
        </authorList>
    </citation>
    <scope>NUCLEOTIDE SEQUENCE [GENOMIC DNA]</scope>
    <source>
        <strain>ATCC 204508 / S288c</strain>
    </source>
</reference>
<evidence type="ECO:0000250" key="1"/>
<evidence type="ECO:0000255" key="2">
    <source>
        <dbReference type="PROSITE-ProRule" id="PRU00156"/>
    </source>
</evidence>
<evidence type="ECO:0000305" key="3"/>
<comment type="function">
    <text evidence="1">PPIases accelerate the folding of proteins. It catalyzes the cis-trans isomerization of proline imidic peptide bonds in oligopeptides (By similarity).</text>
</comment>
<comment type="catalytic activity">
    <reaction>
        <text>[protein]-peptidylproline (omega=180) = [protein]-peptidylproline (omega=0)</text>
        <dbReference type="Rhea" id="RHEA:16237"/>
        <dbReference type="Rhea" id="RHEA-COMP:10747"/>
        <dbReference type="Rhea" id="RHEA-COMP:10748"/>
        <dbReference type="ChEBI" id="CHEBI:83833"/>
        <dbReference type="ChEBI" id="CHEBI:83834"/>
        <dbReference type="EC" id="5.2.1.8"/>
    </reaction>
</comment>
<sequence length="308" mass="34946">MKSFFLYLYVAFMFSCITALPLPVDNKRASSDSLDLKKKYAPDPPITHNVNIGIVFTDPESSEEAGRLITIDLYGTMVPKTVMTFCQYVDSVKDRLASRHSYSPERDFDKILPNGAIEGSSVSSSSIEETEMLAPKLPEENHSLIHDRPGRVSMIKDDKGLKFIIETSETPLEGESVVFGQVTAGLKDLMDKLANVKTDENGKPEQPITIGYISSQEHRIQHAKEAHEKYLQRLQDYQNGDLEKGITLKNYLYQGSQRKLEDAKYNQLHHPLPKIMLGISVLLLFYVLAKYRKRIFNRSSKIVSIRED</sequence>
<name>CYP8_YEAST</name>
<protein>
    <recommendedName>
        <fullName>Peptidyl-prolyl cis-trans isomerase CYP8</fullName>
        <shortName>PPIase CYP8</shortName>
        <ecNumber>5.2.1.8</ecNumber>
    </recommendedName>
    <alternativeName>
        <fullName>Rotamase CYP8</fullName>
    </alternativeName>
</protein>
<gene>
    <name type="primary">CPR8</name>
    <name type="ordered locus">YNR028W</name>
    <name type="ORF">N3255</name>
</gene>
<keyword id="KW-0413">Isomerase</keyword>
<keyword id="KW-1185">Reference proteome</keyword>
<keyword id="KW-0697">Rotamase</keyword>
<proteinExistence type="inferred from homology"/>